<sequence length="312" mass="34020">MTIQLKCLSHTPLRGINDPGAATVAEVDAVLAKAKAEVEAFDPELIVVFAPDHYNGLFYDLMPPFVIATAADSVGDYQTMTGPLSVDKDLALEMAKFILDSDIDIAISHRLQVDHGCTQTLEEMTGSLTRYPVIPIIINSVAPPFGPYRRVRKLGEAVGKFIAKLNKRVLILGTGGLSHEPPVPLLSGANEDIANFLIAGRNPTPEFRAARQARTLATGMIFGKPECELTPLNPEWDQNFMDLLIRGQLDKVDAFDIEEISKAAGRSTHEVRTWVAAFAAMAASGPYNAHQDYYRPINEWIAGYGVVSASQK</sequence>
<keyword id="KW-0058">Aromatic hydrocarbons catabolism</keyword>
<keyword id="KW-0223">Dioxygenase</keyword>
<keyword id="KW-0408">Iron</keyword>
<keyword id="KW-0560">Oxidoreductase</keyword>
<feature type="chain" id="PRO_0000337648" description="2,3-dihydroxyphenylpropionate/2,3-dihydroxicinnamic acid 1,2-dioxygenase 1">
    <location>
        <begin position="1"/>
        <end position="312"/>
    </location>
</feature>
<feature type="active site" description="Proton donor" evidence="1">
    <location>
        <position position="115"/>
    </location>
</feature>
<feature type="active site" description="Proton acceptor" evidence="1">
    <location>
        <position position="179"/>
    </location>
</feature>
<gene>
    <name evidence="1" type="primary">mhpB1</name>
    <name type="ordered locus">Daro_0901</name>
</gene>
<dbReference type="EC" id="1.13.11.16" evidence="1"/>
<dbReference type="EMBL" id="CP000089">
    <property type="protein sequence ID" value="AAZ45657.1"/>
    <property type="molecule type" value="Genomic_DNA"/>
</dbReference>
<dbReference type="SMR" id="Q47HM4"/>
<dbReference type="STRING" id="159087.Daro_0901"/>
<dbReference type="KEGG" id="dar:Daro_0901"/>
<dbReference type="eggNOG" id="COG3384">
    <property type="taxonomic scope" value="Bacteria"/>
</dbReference>
<dbReference type="HOGENOM" id="CLU_078149_0_0_4"/>
<dbReference type="OrthoDB" id="8673673at2"/>
<dbReference type="UniPathway" id="UPA00714"/>
<dbReference type="GO" id="GO:0047070">
    <property type="term" value="F:3-carboxyethylcatechol 2,3-dioxygenase activity"/>
    <property type="evidence" value="ECO:0007669"/>
    <property type="project" value="UniProtKB-UniRule"/>
</dbReference>
<dbReference type="GO" id="GO:0008198">
    <property type="term" value="F:ferrous iron binding"/>
    <property type="evidence" value="ECO:0007669"/>
    <property type="project" value="InterPro"/>
</dbReference>
<dbReference type="GO" id="GO:0019380">
    <property type="term" value="P:3-phenylpropionate catabolic process"/>
    <property type="evidence" value="ECO:0007669"/>
    <property type="project" value="UniProtKB-UniRule"/>
</dbReference>
<dbReference type="CDD" id="cd07365">
    <property type="entry name" value="MhpB_like"/>
    <property type="match status" value="1"/>
</dbReference>
<dbReference type="Gene3D" id="3.40.830.10">
    <property type="entry name" value="LigB-like"/>
    <property type="match status" value="1"/>
</dbReference>
<dbReference type="HAMAP" id="MF_01653">
    <property type="entry name" value="MhpB"/>
    <property type="match status" value="1"/>
</dbReference>
<dbReference type="InterPro" id="IPR023789">
    <property type="entry name" value="DHPP/DHXA_dioxygenase"/>
</dbReference>
<dbReference type="InterPro" id="IPR004183">
    <property type="entry name" value="Xdiol_dOase_suB"/>
</dbReference>
<dbReference type="NCBIfam" id="NF009908">
    <property type="entry name" value="PRK13370.1-2"/>
    <property type="match status" value="1"/>
</dbReference>
<dbReference type="NCBIfam" id="NF009910">
    <property type="entry name" value="PRK13370.1-4"/>
    <property type="match status" value="1"/>
</dbReference>
<dbReference type="Pfam" id="PF02900">
    <property type="entry name" value="LigB"/>
    <property type="match status" value="1"/>
</dbReference>
<dbReference type="SUPFAM" id="SSF53213">
    <property type="entry name" value="LigB-like"/>
    <property type="match status" value="1"/>
</dbReference>
<protein>
    <recommendedName>
        <fullName evidence="1">2,3-dihydroxyphenylpropionate/2,3-dihydroxicinnamic acid 1,2-dioxygenase 1</fullName>
        <ecNumber evidence="1">1.13.11.16</ecNumber>
    </recommendedName>
    <alternativeName>
        <fullName evidence="1">3-carboxyethylcatechol 2,3-dioxygenase 1</fullName>
    </alternativeName>
</protein>
<accession>Q47HM4</accession>
<comment type="function">
    <text evidence="1">Catalyzes the non-heme iron(II)-dependent oxidative cleavage of 2,3-dihydroxyphenylpropionic acid and 2,3-dihydroxicinnamic acid into 2-hydroxy-6-ketononadienedioate and 2-hydroxy-6-ketononatrienedioate, respectively.</text>
</comment>
<comment type="catalytic activity">
    <reaction evidence="1">
        <text>3-(2,3-dihydroxyphenyl)propanoate + O2 = (2Z,4E)-2-hydroxy-6-oxonona-2,4-dienedioate + H(+)</text>
        <dbReference type="Rhea" id="RHEA:23840"/>
        <dbReference type="ChEBI" id="CHEBI:15378"/>
        <dbReference type="ChEBI" id="CHEBI:15379"/>
        <dbReference type="ChEBI" id="CHEBI:46951"/>
        <dbReference type="ChEBI" id="CHEBI:66887"/>
        <dbReference type="EC" id="1.13.11.16"/>
    </reaction>
</comment>
<comment type="catalytic activity">
    <reaction evidence="1">
        <text>(2E)-3-(2,3-dihydroxyphenyl)prop-2-enoate + O2 = (2Z,4E,7E)-2-hydroxy-6-oxonona-2,4,7-trienedioate + H(+)</text>
        <dbReference type="Rhea" id="RHEA:25054"/>
        <dbReference type="ChEBI" id="CHEBI:15378"/>
        <dbReference type="ChEBI" id="CHEBI:15379"/>
        <dbReference type="ChEBI" id="CHEBI:58642"/>
        <dbReference type="ChEBI" id="CHEBI:66888"/>
        <dbReference type="EC" id="1.13.11.16"/>
    </reaction>
</comment>
<comment type="cofactor">
    <cofactor evidence="1">
        <name>Fe(2+)</name>
        <dbReference type="ChEBI" id="CHEBI:29033"/>
    </cofactor>
</comment>
<comment type="pathway">
    <text evidence="1">Aromatic compound metabolism; 3-phenylpropanoate degradation.</text>
</comment>
<comment type="subunit">
    <text evidence="1">Homotetramer.</text>
</comment>
<comment type="similarity">
    <text evidence="1">Belongs to the LigB/MhpB extradiol dioxygenase family.</text>
</comment>
<proteinExistence type="inferred from homology"/>
<evidence type="ECO:0000255" key="1">
    <source>
        <dbReference type="HAMAP-Rule" id="MF_01653"/>
    </source>
</evidence>
<organism>
    <name type="scientific">Dechloromonas aromatica (strain RCB)</name>
    <dbReference type="NCBI Taxonomy" id="159087"/>
    <lineage>
        <taxon>Bacteria</taxon>
        <taxon>Pseudomonadati</taxon>
        <taxon>Pseudomonadota</taxon>
        <taxon>Betaproteobacteria</taxon>
        <taxon>Rhodocyclales</taxon>
        <taxon>Azonexaceae</taxon>
        <taxon>Dechloromonas</taxon>
    </lineage>
</organism>
<reference key="1">
    <citation type="journal article" date="2009" name="BMC Genomics">
        <title>Metabolic analysis of the soil microbe Dechloromonas aromatica str. RCB: indications of a surprisingly complex life-style and cryptic anaerobic pathways for aromatic degradation.</title>
        <authorList>
            <person name="Salinero K.K."/>
            <person name="Keller K."/>
            <person name="Feil W.S."/>
            <person name="Feil H."/>
            <person name="Trong S."/>
            <person name="Di Bartolo G."/>
            <person name="Lapidus A."/>
        </authorList>
    </citation>
    <scope>NUCLEOTIDE SEQUENCE [LARGE SCALE GENOMIC DNA]</scope>
    <source>
        <strain>RCB</strain>
    </source>
</reference>
<name>MHPB1_DECAR</name>